<feature type="chain" id="PRO_1000100984" description="ATP-dependent protease ATPase subunit HslU">
    <location>
        <begin position="1"/>
        <end position="459"/>
    </location>
</feature>
<feature type="binding site" evidence="1">
    <location>
        <position position="26"/>
    </location>
    <ligand>
        <name>ATP</name>
        <dbReference type="ChEBI" id="CHEBI:30616"/>
    </ligand>
</feature>
<feature type="binding site" evidence="1">
    <location>
        <begin position="68"/>
        <end position="73"/>
    </location>
    <ligand>
        <name>ATP</name>
        <dbReference type="ChEBI" id="CHEBI:30616"/>
    </ligand>
</feature>
<feature type="binding site" evidence="1">
    <location>
        <position position="271"/>
    </location>
    <ligand>
        <name>ATP</name>
        <dbReference type="ChEBI" id="CHEBI:30616"/>
    </ligand>
</feature>
<feature type="binding site" evidence="1">
    <location>
        <position position="337"/>
    </location>
    <ligand>
        <name>ATP</name>
        <dbReference type="ChEBI" id="CHEBI:30616"/>
    </ligand>
</feature>
<feature type="binding site" evidence="1">
    <location>
        <position position="409"/>
    </location>
    <ligand>
        <name>ATP</name>
        <dbReference type="ChEBI" id="CHEBI:30616"/>
    </ligand>
</feature>
<keyword id="KW-0067">ATP-binding</keyword>
<keyword id="KW-0143">Chaperone</keyword>
<keyword id="KW-0963">Cytoplasm</keyword>
<keyword id="KW-0547">Nucleotide-binding</keyword>
<keyword id="KW-0346">Stress response</keyword>
<proteinExistence type="inferred from homology"/>
<accession>B0U6U9</accession>
<evidence type="ECO:0000255" key="1">
    <source>
        <dbReference type="HAMAP-Rule" id="MF_00249"/>
    </source>
</evidence>
<name>HSLU_XYLFM</name>
<gene>
    <name evidence="1" type="primary">hslU</name>
    <name type="ordered locus">Xfasm12_0827</name>
</gene>
<sequence length="459" mass="51603">MPSKTDFTSSTMTPREIVQELDRHIVGQQVAKRSVAIALRNRWRRMQLPEELRNEVMPKNILMIGPTGVGKTEIARRLATLANAPFVKVEATRFTEVGYVGKDVEQIGRDLVDTAVKMYREQAKVRVRTQVEEYAEERILDALLPRRSVGIGFDVDADVIRQEPSAHDSETRAKFRRMLRSGELEDREIELDVAVNVSMDIMTPPGMEEMGQQLRQMFSNIGGGKSQKRKLTIKAARPLLIEEEAAKLVNEDEIRAAAIEACEQNGIVFIDEIDKVVKRGDTVGGGDVSREGVQRDLLPLVEGSNVSTKYGTIRTNHILFIASGAFHLTKPSDLIPELQGRFPIRVELDALSKADFIRILTEPKAALTKQYQELLKTEGVSLDFTEDAIDRIAEIAYLVNERQENIGARRLHTVLERLLETLSYESPDRDGESVTVDADYVNAHLGELVKDPDLSRYIL</sequence>
<reference key="1">
    <citation type="journal article" date="2010" name="J. Bacteriol.">
        <title>Whole genome sequences of two Xylella fastidiosa strains (M12 and M23) causing almond leaf scorch disease in California.</title>
        <authorList>
            <person name="Chen J."/>
            <person name="Xie G."/>
            <person name="Han S."/>
            <person name="Chertkov O."/>
            <person name="Sims D."/>
            <person name="Civerolo E.L."/>
        </authorList>
    </citation>
    <scope>NUCLEOTIDE SEQUENCE [LARGE SCALE GENOMIC DNA]</scope>
    <source>
        <strain>M12</strain>
    </source>
</reference>
<protein>
    <recommendedName>
        <fullName evidence="1">ATP-dependent protease ATPase subunit HslU</fullName>
    </recommendedName>
    <alternativeName>
        <fullName evidence="1">Unfoldase HslU</fullName>
    </alternativeName>
</protein>
<organism>
    <name type="scientific">Xylella fastidiosa (strain M12)</name>
    <dbReference type="NCBI Taxonomy" id="405440"/>
    <lineage>
        <taxon>Bacteria</taxon>
        <taxon>Pseudomonadati</taxon>
        <taxon>Pseudomonadota</taxon>
        <taxon>Gammaproteobacteria</taxon>
        <taxon>Lysobacterales</taxon>
        <taxon>Lysobacteraceae</taxon>
        <taxon>Xylella</taxon>
    </lineage>
</organism>
<dbReference type="EMBL" id="CP000941">
    <property type="protein sequence ID" value="ACA11815.1"/>
    <property type="molecule type" value="Genomic_DNA"/>
</dbReference>
<dbReference type="RefSeq" id="WP_012337775.1">
    <property type="nucleotide sequence ID" value="NC_010513.1"/>
</dbReference>
<dbReference type="SMR" id="B0U6U9"/>
<dbReference type="KEGG" id="xfm:Xfasm12_0827"/>
<dbReference type="HOGENOM" id="CLU_033123_0_0_6"/>
<dbReference type="GO" id="GO:0009376">
    <property type="term" value="C:HslUV protease complex"/>
    <property type="evidence" value="ECO:0007669"/>
    <property type="project" value="UniProtKB-UniRule"/>
</dbReference>
<dbReference type="GO" id="GO:0005524">
    <property type="term" value="F:ATP binding"/>
    <property type="evidence" value="ECO:0007669"/>
    <property type="project" value="UniProtKB-UniRule"/>
</dbReference>
<dbReference type="GO" id="GO:0016887">
    <property type="term" value="F:ATP hydrolysis activity"/>
    <property type="evidence" value="ECO:0007669"/>
    <property type="project" value="InterPro"/>
</dbReference>
<dbReference type="GO" id="GO:0008233">
    <property type="term" value="F:peptidase activity"/>
    <property type="evidence" value="ECO:0007669"/>
    <property type="project" value="InterPro"/>
</dbReference>
<dbReference type="GO" id="GO:0036402">
    <property type="term" value="F:proteasome-activating activity"/>
    <property type="evidence" value="ECO:0007669"/>
    <property type="project" value="UniProtKB-UniRule"/>
</dbReference>
<dbReference type="GO" id="GO:0043335">
    <property type="term" value="P:protein unfolding"/>
    <property type="evidence" value="ECO:0007669"/>
    <property type="project" value="UniProtKB-UniRule"/>
</dbReference>
<dbReference type="GO" id="GO:0051603">
    <property type="term" value="P:proteolysis involved in protein catabolic process"/>
    <property type="evidence" value="ECO:0007669"/>
    <property type="project" value="TreeGrafter"/>
</dbReference>
<dbReference type="CDD" id="cd19498">
    <property type="entry name" value="RecA-like_HslU"/>
    <property type="match status" value="1"/>
</dbReference>
<dbReference type="FunFam" id="3.40.50.300:FF:000213">
    <property type="entry name" value="ATP-dependent protease ATPase subunit HslU"/>
    <property type="match status" value="1"/>
</dbReference>
<dbReference type="FunFam" id="3.40.50.300:FF:000220">
    <property type="entry name" value="ATP-dependent protease ATPase subunit HslU"/>
    <property type="match status" value="1"/>
</dbReference>
<dbReference type="Gene3D" id="1.10.8.60">
    <property type="match status" value="1"/>
</dbReference>
<dbReference type="Gene3D" id="1.10.8.10">
    <property type="entry name" value="DNA helicase RuvA subunit, C-terminal domain"/>
    <property type="match status" value="1"/>
</dbReference>
<dbReference type="Gene3D" id="3.40.50.300">
    <property type="entry name" value="P-loop containing nucleotide triphosphate hydrolases"/>
    <property type="match status" value="2"/>
</dbReference>
<dbReference type="HAMAP" id="MF_00249">
    <property type="entry name" value="HslU"/>
    <property type="match status" value="1"/>
</dbReference>
<dbReference type="InterPro" id="IPR003593">
    <property type="entry name" value="AAA+_ATPase"/>
</dbReference>
<dbReference type="InterPro" id="IPR050052">
    <property type="entry name" value="ATP-dep_Clp_protease_ClpX"/>
</dbReference>
<dbReference type="InterPro" id="IPR003959">
    <property type="entry name" value="ATPase_AAA_core"/>
</dbReference>
<dbReference type="InterPro" id="IPR019489">
    <property type="entry name" value="Clp_ATPase_C"/>
</dbReference>
<dbReference type="InterPro" id="IPR004491">
    <property type="entry name" value="HslU"/>
</dbReference>
<dbReference type="InterPro" id="IPR027417">
    <property type="entry name" value="P-loop_NTPase"/>
</dbReference>
<dbReference type="NCBIfam" id="TIGR00390">
    <property type="entry name" value="hslU"/>
    <property type="match status" value="1"/>
</dbReference>
<dbReference type="NCBIfam" id="NF003544">
    <property type="entry name" value="PRK05201.1"/>
    <property type="match status" value="1"/>
</dbReference>
<dbReference type="PANTHER" id="PTHR48102">
    <property type="entry name" value="ATP-DEPENDENT CLP PROTEASE ATP-BINDING SUBUNIT CLPX-LIKE, MITOCHONDRIAL-RELATED"/>
    <property type="match status" value="1"/>
</dbReference>
<dbReference type="PANTHER" id="PTHR48102:SF3">
    <property type="entry name" value="ATP-DEPENDENT PROTEASE ATPASE SUBUNIT HSLU"/>
    <property type="match status" value="1"/>
</dbReference>
<dbReference type="Pfam" id="PF00004">
    <property type="entry name" value="AAA"/>
    <property type="match status" value="1"/>
</dbReference>
<dbReference type="Pfam" id="PF07724">
    <property type="entry name" value="AAA_2"/>
    <property type="match status" value="1"/>
</dbReference>
<dbReference type="Pfam" id="PF10431">
    <property type="entry name" value="ClpB_D2-small"/>
    <property type="match status" value="1"/>
</dbReference>
<dbReference type="SMART" id="SM00382">
    <property type="entry name" value="AAA"/>
    <property type="match status" value="1"/>
</dbReference>
<dbReference type="SMART" id="SM01086">
    <property type="entry name" value="ClpB_D2-small"/>
    <property type="match status" value="1"/>
</dbReference>
<dbReference type="SUPFAM" id="SSF52540">
    <property type="entry name" value="P-loop containing nucleoside triphosphate hydrolases"/>
    <property type="match status" value="1"/>
</dbReference>
<comment type="function">
    <text evidence="1">ATPase subunit of a proteasome-like degradation complex; this subunit has chaperone activity. The binding of ATP and its subsequent hydrolysis by HslU are essential for unfolding of protein substrates subsequently hydrolyzed by HslV. HslU recognizes the N-terminal part of its protein substrates and unfolds these before they are guided to HslV for hydrolysis.</text>
</comment>
<comment type="subunit">
    <text evidence="1">A double ring-shaped homohexamer of HslV is capped on each side by a ring-shaped HslU homohexamer. The assembly of the HslU/HslV complex is dependent on binding of ATP.</text>
</comment>
<comment type="subcellular location">
    <subcellularLocation>
        <location evidence="1">Cytoplasm</location>
    </subcellularLocation>
</comment>
<comment type="similarity">
    <text evidence="1">Belongs to the ClpX chaperone family. HslU subfamily.</text>
</comment>